<accession>B4RGW0</accession>
<dbReference type="EC" id="2.2.1.7" evidence="1"/>
<dbReference type="EMBL" id="CP000747">
    <property type="protein sequence ID" value="ACG77326.1"/>
    <property type="molecule type" value="Genomic_DNA"/>
</dbReference>
<dbReference type="RefSeq" id="WP_012521474.1">
    <property type="nucleotide sequence ID" value="NC_011144.1"/>
</dbReference>
<dbReference type="SMR" id="B4RGW0"/>
<dbReference type="STRING" id="450851.PHZ_c0912"/>
<dbReference type="KEGG" id="pzu:PHZ_c0912"/>
<dbReference type="eggNOG" id="COG1154">
    <property type="taxonomic scope" value="Bacteria"/>
</dbReference>
<dbReference type="HOGENOM" id="CLU_009227_1_4_5"/>
<dbReference type="OrthoDB" id="9803371at2"/>
<dbReference type="UniPathway" id="UPA00064">
    <property type="reaction ID" value="UER00091"/>
</dbReference>
<dbReference type="Proteomes" id="UP000001868">
    <property type="component" value="Chromosome"/>
</dbReference>
<dbReference type="GO" id="GO:0008661">
    <property type="term" value="F:1-deoxy-D-xylulose-5-phosphate synthase activity"/>
    <property type="evidence" value="ECO:0007669"/>
    <property type="project" value="UniProtKB-UniRule"/>
</dbReference>
<dbReference type="GO" id="GO:0000287">
    <property type="term" value="F:magnesium ion binding"/>
    <property type="evidence" value="ECO:0007669"/>
    <property type="project" value="UniProtKB-UniRule"/>
</dbReference>
<dbReference type="GO" id="GO:0030976">
    <property type="term" value="F:thiamine pyrophosphate binding"/>
    <property type="evidence" value="ECO:0007669"/>
    <property type="project" value="UniProtKB-UniRule"/>
</dbReference>
<dbReference type="GO" id="GO:0052865">
    <property type="term" value="P:1-deoxy-D-xylulose 5-phosphate biosynthetic process"/>
    <property type="evidence" value="ECO:0007669"/>
    <property type="project" value="UniProtKB-UniPathway"/>
</dbReference>
<dbReference type="GO" id="GO:0019682">
    <property type="term" value="P:glyceraldehyde-3-phosphate metabolic process"/>
    <property type="evidence" value="ECO:0007669"/>
    <property type="project" value="UniProtKB-ARBA"/>
</dbReference>
<dbReference type="GO" id="GO:0016114">
    <property type="term" value="P:terpenoid biosynthetic process"/>
    <property type="evidence" value="ECO:0007669"/>
    <property type="project" value="UniProtKB-UniRule"/>
</dbReference>
<dbReference type="GO" id="GO:0009228">
    <property type="term" value="P:thiamine biosynthetic process"/>
    <property type="evidence" value="ECO:0007669"/>
    <property type="project" value="UniProtKB-UniRule"/>
</dbReference>
<dbReference type="CDD" id="cd02007">
    <property type="entry name" value="TPP_DXS"/>
    <property type="match status" value="1"/>
</dbReference>
<dbReference type="CDD" id="cd07033">
    <property type="entry name" value="TPP_PYR_DXS_TK_like"/>
    <property type="match status" value="1"/>
</dbReference>
<dbReference type="FunFam" id="3.40.50.920:FF:000002">
    <property type="entry name" value="1-deoxy-D-xylulose-5-phosphate synthase"/>
    <property type="match status" value="1"/>
</dbReference>
<dbReference type="FunFam" id="3.40.50.970:FF:000005">
    <property type="entry name" value="1-deoxy-D-xylulose-5-phosphate synthase"/>
    <property type="match status" value="1"/>
</dbReference>
<dbReference type="Gene3D" id="3.40.50.920">
    <property type="match status" value="1"/>
</dbReference>
<dbReference type="Gene3D" id="3.40.50.970">
    <property type="match status" value="2"/>
</dbReference>
<dbReference type="HAMAP" id="MF_00315">
    <property type="entry name" value="DXP_synth"/>
    <property type="match status" value="1"/>
</dbReference>
<dbReference type="InterPro" id="IPR005477">
    <property type="entry name" value="Dxylulose-5-P_synthase"/>
</dbReference>
<dbReference type="InterPro" id="IPR029061">
    <property type="entry name" value="THDP-binding"/>
</dbReference>
<dbReference type="InterPro" id="IPR009014">
    <property type="entry name" value="Transketo_C/PFOR_II"/>
</dbReference>
<dbReference type="InterPro" id="IPR005475">
    <property type="entry name" value="Transketolase-like_Pyr-bd"/>
</dbReference>
<dbReference type="InterPro" id="IPR020826">
    <property type="entry name" value="Transketolase_BS"/>
</dbReference>
<dbReference type="InterPro" id="IPR033248">
    <property type="entry name" value="Transketolase_C"/>
</dbReference>
<dbReference type="InterPro" id="IPR049557">
    <property type="entry name" value="Transketolase_CS"/>
</dbReference>
<dbReference type="NCBIfam" id="TIGR00204">
    <property type="entry name" value="dxs"/>
    <property type="match status" value="1"/>
</dbReference>
<dbReference type="NCBIfam" id="NF003933">
    <property type="entry name" value="PRK05444.2-2"/>
    <property type="match status" value="1"/>
</dbReference>
<dbReference type="PANTHER" id="PTHR43322">
    <property type="entry name" value="1-D-DEOXYXYLULOSE 5-PHOSPHATE SYNTHASE-RELATED"/>
    <property type="match status" value="1"/>
</dbReference>
<dbReference type="PANTHER" id="PTHR43322:SF5">
    <property type="entry name" value="1-DEOXY-D-XYLULOSE-5-PHOSPHATE SYNTHASE, CHLOROPLASTIC"/>
    <property type="match status" value="1"/>
</dbReference>
<dbReference type="Pfam" id="PF13292">
    <property type="entry name" value="DXP_synthase_N"/>
    <property type="match status" value="1"/>
</dbReference>
<dbReference type="Pfam" id="PF02779">
    <property type="entry name" value="Transket_pyr"/>
    <property type="match status" value="1"/>
</dbReference>
<dbReference type="Pfam" id="PF02780">
    <property type="entry name" value="Transketolase_C"/>
    <property type="match status" value="1"/>
</dbReference>
<dbReference type="SMART" id="SM00861">
    <property type="entry name" value="Transket_pyr"/>
    <property type="match status" value="1"/>
</dbReference>
<dbReference type="SUPFAM" id="SSF52518">
    <property type="entry name" value="Thiamin diphosphate-binding fold (THDP-binding)"/>
    <property type="match status" value="2"/>
</dbReference>
<dbReference type="SUPFAM" id="SSF52922">
    <property type="entry name" value="TK C-terminal domain-like"/>
    <property type="match status" value="1"/>
</dbReference>
<dbReference type="PROSITE" id="PS00801">
    <property type="entry name" value="TRANSKETOLASE_1"/>
    <property type="match status" value="1"/>
</dbReference>
<dbReference type="PROSITE" id="PS00802">
    <property type="entry name" value="TRANSKETOLASE_2"/>
    <property type="match status" value="1"/>
</dbReference>
<feature type="chain" id="PRO_1000132942" description="1-deoxy-D-xylulose-5-phosphate synthase">
    <location>
        <begin position="1"/>
        <end position="638"/>
    </location>
</feature>
<feature type="binding site" evidence="1">
    <location>
        <position position="77"/>
    </location>
    <ligand>
        <name>thiamine diphosphate</name>
        <dbReference type="ChEBI" id="CHEBI:58937"/>
    </ligand>
</feature>
<feature type="binding site" evidence="1">
    <location>
        <begin position="118"/>
        <end position="120"/>
    </location>
    <ligand>
        <name>thiamine diphosphate</name>
        <dbReference type="ChEBI" id="CHEBI:58937"/>
    </ligand>
</feature>
<feature type="binding site" evidence="1">
    <location>
        <position position="149"/>
    </location>
    <ligand>
        <name>Mg(2+)</name>
        <dbReference type="ChEBI" id="CHEBI:18420"/>
    </ligand>
</feature>
<feature type="binding site" evidence="1">
    <location>
        <begin position="150"/>
        <end position="151"/>
    </location>
    <ligand>
        <name>thiamine diphosphate</name>
        <dbReference type="ChEBI" id="CHEBI:58937"/>
    </ligand>
</feature>
<feature type="binding site" evidence="1">
    <location>
        <position position="178"/>
    </location>
    <ligand>
        <name>Mg(2+)</name>
        <dbReference type="ChEBI" id="CHEBI:18420"/>
    </ligand>
</feature>
<feature type="binding site" evidence="1">
    <location>
        <position position="178"/>
    </location>
    <ligand>
        <name>thiamine diphosphate</name>
        <dbReference type="ChEBI" id="CHEBI:58937"/>
    </ligand>
</feature>
<feature type="binding site" evidence="1">
    <location>
        <position position="287"/>
    </location>
    <ligand>
        <name>thiamine diphosphate</name>
        <dbReference type="ChEBI" id="CHEBI:58937"/>
    </ligand>
</feature>
<feature type="binding site" evidence="1">
    <location>
        <position position="369"/>
    </location>
    <ligand>
        <name>thiamine diphosphate</name>
        <dbReference type="ChEBI" id="CHEBI:58937"/>
    </ligand>
</feature>
<organism>
    <name type="scientific">Phenylobacterium zucineum (strain HLK1)</name>
    <dbReference type="NCBI Taxonomy" id="450851"/>
    <lineage>
        <taxon>Bacteria</taxon>
        <taxon>Pseudomonadati</taxon>
        <taxon>Pseudomonadota</taxon>
        <taxon>Alphaproteobacteria</taxon>
        <taxon>Caulobacterales</taxon>
        <taxon>Caulobacteraceae</taxon>
        <taxon>Phenylobacterium</taxon>
    </lineage>
</organism>
<gene>
    <name evidence="1" type="primary">dxs</name>
    <name type="ordered locus">PHZ_c0912</name>
</gene>
<proteinExistence type="inferred from homology"/>
<name>DXS_PHEZH</name>
<protein>
    <recommendedName>
        <fullName evidence="1">1-deoxy-D-xylulose-5-phosphate synthase</fullName>
        <ecNumber evidence="1">2.2.1.7</ecNumber>
    </recommendedName>
    <alternativeName>
        <fullName evidence="1">1-deoxyxylulose-5-phosphate synthase</fullName>
        <shortName evidence="1">DXP synthase</shortName>
        <shortName evidence="1">DXPS</shortName>
    </alternativeName>
</protein>
<keyword id="KW-0414">Isoprene biosynthesis</keyword>
<keyword id="KW-0460">Magnesium</keyword>
<keyword id="KW-0479">Metal-binding</keyword>
<keyword id="KW-1185">Reference proteome</keyword>
<keyword id="KW-0784">Thiamine biosynthesis</keyword>
<keyword id="KW-0786">Thiamine pyrophosphate</keyword>
<keyword id="KW-0808">Transferase</keyword>
<sequence>MPPVTPLLDTVSSPADTRGLSIAQLRQLADEVRAETIDAVSQTGGHLGAGLGVVELTVALHHVYETPKDILIWDVGHQAYPHKILTGRRDRIRTLRQGGGLSGFTKRAESDYDPFGAAHAATSISAALGFCAARDREGRDNKVVAVIGDGSMSAGMAYEAMNNAYETTKQLTVILNDNDMSIAPPVGGMSAYMARLVSGGGYQSLRNLGKAVSRAFPRPLQEAARKAEEYARGMVTGGTFFEELGFYYVGPIDGHDMDALVHVLQNARKIDDKPVLVHVVTQKGKGYAPAEKAADKYHGVVKFDVVTGAQAKSQAAAPSYTKVFAQELVKHAERDERVVAITAAMPSGTGLDLFGQRFPERTFDVGIAEQHAVTFAAGLAADGMKPFAAIYSTFLQRGYDQVVHDVAIQSLPVRFAIDRAGLVGADGPTHAGSFDVGFMGQLPGMVVMGPADEAELARAIATAVAIDDRPSAFRYPRGEGVGVEIPALADPLEIGRGRIVREGTAVAILSFGTRLGESLKAADMLAARGLSATVADARFAKPLDVDLLLRLAREHEALITVEEGAVGGFGGFVLHALAEHGALDRGLKIRTLTLPDIFQDQDKPEAMYAQAGLDAEGIVRAALAALGIDNASVKGRRA</sequence>
<comment type="function">
    <text evidence="1">Catalyzes the acyloin condensation reaction between C atoms 2 and 3 of pyruvate and glyceraldehyde 3-phosphate to yield 1-deoxy-D-xylulose-5-phosphate (DXP).</text>
</comment>
<comment type="catalytic activity">
    <reaction evidence="1">
        <text>D-glyceraldehyde 3-phosphate + pyruvate + H(+) = 1-deoxy-D-xylulose 5-phosphate + CO2</text>
        <dbReference type="Rhea" id="RHEA:12605"/>
        <dbReference type="ChEBI" id="CHEBI:15361"/>
        <dbReference type="ChEBI" id="CHEBI:15378"/>
        <dbReference type="ChEBI" id="CHEBI:16526"/>
        <dbReference type="ChEBI" id="CHEBI:57792"/>
        <dbReference type="ChEBI" id="CHEBI:59776"/>
        <dbReference type="EC" id="2.2.1.7"/>
    </reaction>
</comment>
<comment type="cofactor">
    <cofactor evidence="1">
        <name>Mg(2+)</name>
        <dbReference type="ChEBI" id="CHEBI:18420"/>
    </cofactor>
    <text evidence="1">Binds 1 Mg(2+) ion per subunit.</text>
</comment>
<comment type="cofactor">
    <cofactor evidence="1">
        <name>thiamine diphosphate</name>
        <dbReference type="ChEBI" id="CHEBI:58937"/>
    </cofactor>
    <text evidence="1">Binds 1 thiamine pyrophosphate per subunit.</text>
</comment>
<comment type="pathway">
    <text evidence="1">Metabolic intermediate biosynthesis; 1-deoxy-D-xylulose 5-phosphate biosynthesis; 1-deoxy-D-xylulose 5-phosphate from D-glyceraldehyde 3-phosphate and pyruvate: step 1/1.</text>
</comment>
<comment type="subunit">
    <text evidence="1">Homodimer.</text>
</comment>
<comment type="similarity">
    <text evidence="1">Belongs to the transketolase family. DXPS subfamily.</text>
</comment>
<reference key="1">
    <citation type="journal article" date="2008" name="BMC Genomics">
        <title>Complete genome of Phenylobacterium zucineum - a novel facultative intracellular bacterium isolated from human erythroleukemia cell line K562.</title>
        <authorList>
            <person name="Luo Y."/>
            <person name="Xu X."/>
            <person name="Ding Z."/>
            <person name="Liu Z."/>
            <person name="Zhang B."/>
            <person name="Yan Z."/>
            <person name="Sun J."/>
            <person name="Hu S."/>
            <person name="Hu X."/>
        </authorList>
    </citation>
    <scope>NUCLEOTIDE SEQUENCE [LARGE SCALE GENOMIC DNA]</scope>
    <source>
        <strain>HLK1</strain>
    </source>
</reference>
<evidence type="ECO:0000255" key="1">
    <source>
        <dbReference type="HAMAP-Rule" id="MF_00315"/>
    </source>
</evidence>